<feature type="signal peptide" evidence="2">
    <location>
        <begin position="1"/>
        <end position="22"/>
    </location>
</feature>
<feature type="peptide" id="PRO_0000289808" description="Beta-defensin 104A">
    <location>
        <begin position="23"/>
        <end position="72"/>
    </location>
</feature>
<feature type="disulfide bond" evidence="1">
    <location>
        <begin position="30"/>
        <end position="57"/>
    </location>
</feature>
<feature type="disulfide bond" evidence="1">
    <location>
        <begin position="37"/>
        <end position="51"/>
    </location>
</feature>
<feature type="disulfide bond" evidence="1">
    <location>
        <begin position="41"/>
        <end position="58"/>
    </location>
</feature>
<sequence length="72" mass="8538">MRRLVLLLAISLLLYQDLPVRSEFELDRICGYGTARCRKKCRSQEYRIGRCPNTFACCLRKWDESLLNRTKP</sequence>
<organism>
    <name type="scientific">Gorilla gorilla gorilla</name>
    <name type="common">Western lowland gorilla</name>
    <dbReference type="NCBI Taxonomy" id="9595"/>
    <lineage>
        <taxon>Eukaryota</taxon>
        <taxon>Metazoa</taxon>
        <taxon>Chordata</taxon>
        <taxon>Craniata</taxon>
        <taxon>Vertebrata</taxon>
        <taxon>Euteleostomi</taxon>
        <taxon>Mammalia</taxon>
        <taxon>Eutheria</taxon>
        <taxon>Euarchontoglires</taxon>
        <taxon>Primates</taxon>
        <taxon>Haplorrhini</taxon>
        <taxon>Catarrhini</taxon>
        <taxon>Hominidae</taxon>
        <taxon>Gorilla</taxon>
    </lineage>
</organism>
<gene>
    <name type="primary">DEFB104A</name>
    <name type="synonym">DEFB104</name>
</gene>
<name>D104A_GORGO</name>
<dbReference type="EMBL" id="AM410107">
    <property type="protein sequence ID" value="CAL68922.1"/>
    <property type="molecule type" value="Genomic_DNA"/>
</dbReference>
<dbReference type="SMR" id="A4H202"/>
<dbReference type="FunCoup" id="A4H202">
    <property type="interactions" value="5"/>
</dbReference>
<dbReference type="STRING" id="9593.ENSGGOP00000041231"/>
<dbReference type="eggNOG" id="ENOG502TDUP">
    <property type="taxonomic scope" value="Eukaryota"/>
</dbReference>
<dbReference type="HOGENOM" id="CLU_202010_0_0_1"/>
<dbReference type="InParanoid" id="A4H202"/>
<dbReference type="Proteomes" id="UP000001519">
    <property type="component" value="Unplaced"/>
</dbReference>
<dbReference type="GO" id="GO:0005576">
    <property type="term" value="C:extracellular region"/>
    <property type="evidence" value="ECO:0007669"/>
    <property type="project" value="UniProtKB-SubCell"/>
</dbReference>
<dbReference type="GO" id="GO:0042742">
    <property type="term" value="P:defense response to bacterium"/>
    <property type="evidence" value="ECO:0007669"/>
    <property type="project" value="UniProtKB-KW"/>
</dbReference>
<dbReference type="GO" id="GO:0045087">
    <property type="term" value="P:innate immune response"/>
    <property type="evidence" value="ECO:0007669"/>
    <property type="project" value="InterPro"/>
</dbReference>
<dbReference type="InterPro" id="IPR025933">
    <property type="entry name" value="Beta_defensin_dom"/>
</dbReference>
<dbReference type="Pfam" id="PF13841">
    <property type="entry name" value="Defensin_beta_2"/>
    <property type="match status" value="1"/>
</dbReference>
<keyword id="KW-0044">Antibiotic</keyword>
<keyword id="KW-0929">Antimicrobial</keyword>
<keyword id="KW-0211">Defensin</keyword>
<keyword id="KW-1015">Disulfide bond</keyword>
<keyword id="KW-1185">Reference proteome</keyword>
<keyword id="KW-0964">Secreted</keyword>
<keyword id="KW-0732">Signal</keyword>
<accession>A4H202</accession>
<reference key="1">
    <citation type="submission" date="2006-11" db="EMBL/GenBank/DDBJ databases">
        <title>Evolution and sequence variation of human beta-defensin genes.</title>
        <authorList>
            <person name="Hollox E.J."/>
            <person name="Armour J.A.L."/>
        </authorList>
    </citation>
    <scope>NUCLEOTIDE SEQUENCE [GENOMIC DNA]</scope>
</reference>
<comment type="function">
    <text evidence="1">Has antimicrobial activity.</text>
</comment>
<comment type="subcellular location">
    <subcellularLocation>
        <location evidence="1">Secreted</location>
    </subcellularLocation>
</comment>
<comment type="similarity">
    <text evidence="3">Belongs to the beta-defensin family.</text>
</comment>
<protein>
    <recommendedName>
        <fullName>Beta-defensin 104A</fullName>
    </recommendedName>
    <alternativeName>
        <fullName>Defensin, beta 104</fullName>
    </alternativeName>
    <alternativeName>
        <fullName>Defensin, beta 104A</fullName>
    </alternativeName>
</protein>
<proteinExistence type="inferred from homology"/>
<evidence type="ECO:0000250" key="1"/>
<evidence type="ECO:0000255" key="2"/>
<evidence type="ECO:0000305" key="3"/>